<feature type="chain" id="PRO_1000012987" description="UPF0145 protein CKO_02237">
    <location>
        <begin position="1"/>
        <end position="107"/>
    </location>
</feature>
<comment type="similarity">
    <text evidence="1">Belongs to the UPF0145 family.</text>
</comment>
<gene>
    <name type="ordered locus">CKO_02237</name>
</gene>
<name>Y2237_CITK8</name>
<organism>
    <name type="scientific">Citrobacter koseri (strain ATCC BAA-895 / CDC 4225-83 / SGSC4696)</name>
    <dbReference type="NCBI Taxonomy" id="290338"/>
    <lineage>
        <taxon>Bacteria</taxon>
        <taxon>Pseudomonadati</taxon>
        <taxon>Pseudomonadota</taxon>
        <taxon>Gammaproteobacteria</taxon>
        <taxon>Enterobacterales</taxon>
        <taxon>Enterobacteriaceae</taxon>
        <taxon>Citrobacter</taxon>
    </lineage>
</organism>
<keyword id="KW-1185">Reference proteome</keyword>
<accession>A8AIP7</accession>
<proteinExistence type="inferred from homology"/>
<sequence>MQFSTTPTLEGQNIVEYCGVVTGEAILGANIFRDFFAGIRDIVGGRSGSYEKELRKAREIAFQELGEQAKALGADAVVGIDIDYETVGKDSSMLMVSVSGTAVKTRR</sequence>
<dbReference type="EMBL" id="CP000822">
    <property type="protein sequence ID" value="ABV13360.1"/>
    <property type="molecule type" value="Genomic_DNA"/>
</dbReference>
<dbReference type="RefSeq" id="WP_012133087.1">
    <property type="nucleotide sequence ID" value="NC_009792.1"/>
</dbReference>
<dbReference type="SMR" id="A8AIP7"/>
<dbReference type="STRING" id="290338.CKO_02237"/>
<dbReference type="GeneID" id="45136160"/>
<dbReference type="KEGG" id="cko:CKO_02237"/>
<dbReference type="HOGENOM" id="CLU_117144_3_0_6"/>
<dbReference type="OrthoDB" id="9796448at2"/>
<dbReference type="Proteomes" id="UP000008148">
    <property type="component" value="Chromosome"/>
</dbReference>
<dbReference type="Gene3D" id="3.30.110.70">
    <property type="entry name" value="Hypothetical protein apc22750. Chain B"/>
    <property type="match status" value="1"/>
</dbReference>
<dbReference type="HAMAP" id="MF_00338">
    <property type="entry name" value="UPF0145"/>
    <property type="match status" value="1"/>
</dbReference>
<dbReference type="InterPro" id="IPR035439">
    <property type="entry name" value="UPF0145_dom_sf"/>
</dbReference>
<dbReference type="InterPro" id="IPR002765">
    <property type="entry name" value="UPF0145_YbjQ-like"/>
</dbReference>
<dbReference type="NCBIfam" id="NF002776">
    <property type="entry name" value="PRK02877.1"/>
    <property type="match status" value="1"/>
</dbReference>
<dbReference type="PANTHER" id="PTHR34068">
    <property type="entry name" value="UPF0145 PROTEIN YBJQ"/>
    <property type="match status" value="1"/>
</dbReference>
<dbReference type="PANTHER" id="PTHR34068:SF1">
    <property type="entry name" value="UPF0145 PROTEIN YBJQ"/>
    <property type="match status" value="1"/>
</dbReference>
<dbReference type="Pfam" id="PF01906">
    <property type="entry name" value="YbjQ_1"/>
    <property type="match status" value="1"/>
</dbReference>
<dbReference type="SUPFAM" id="SSF117782">
    <property type="entry name" value="YbjQ-like"/>
    <property type="match status" value="1"/>
</dbReference>
<protein>
    <recommendedName>
        <fullName evidence="1">UPF0145 protein CKO_02237</fullName>
    </recommendedName>
</protein>
<reference key="1">
    <citation type="submission" date="2007-08" db="EMBL/GenBank/DDBJ databases">
        <authorList>
            <consortium name="The Citrobacter koseri Genome Sequencing Project"/>
            <person name="McClelland M."/>
            <person name="Sanderson E.K."/>
            <person name="Porwollik S."/>
            <person name="Spieth J."/>
            <person name="Clifton W.S."/>
            <person name="Latreille P."/>
            <person name="Courtney L."/>
            <person name="Wang C."/>
            <person name="Pepin K."/>
            <person name="Bhonagiri V."/>
            <person name="Nash W."/>
            <person name="Johnson M."/>
            <person name="Thiruvilangam P."/>
            <person name="Wilson R."/>
        </authorList>
    </citation>
    <scope>NUCLEOTIDE SEQUENCE [LARGE SCALE GENOMIC DNA]</scope>
    <source>
        <strain>ATCC BAA-895 / CDC 4225-83 / SGSC4696</strain>
    </source>
</reference>
<evidence type="ECO:0000255" key="1">
    <source>
        <dbReference type="HAMAP-Rule" id="MF_00338"/>
    </source>
</evidence>